<proteinExistence type="inferred from homology"/>
<feature type="chain" id="PRO_1000010826" description="Elongation factor P">
    <location>
        <begin position="1"/>
        <end position="189"/>
    </location>
</feature>
<accession>Q2K302</accession>
<comment type="function">
    <text evidence="1">Involved in peptide bond synthesis. Stimulates efficient translation and peptide-bond synthesis on native or reconstituted 70S ribosomes in vitro. Probably functions indirectly by altering the affinity of the ribosome for aminoacyl-tRNA, thus increasing their reactivity as acceptors for peptidyl transferase.</text>
</comment>
<comment type="pathway">
    <text evidence="1">Protein biosynthesis; polypeptide chain elongation.</text>
</comment>
<comment type="subcellular location">
    <subcellularLocation>
        <location evidence="1">Cytoplasm</location>
    </subcellularLocation>
</comment>
<comment type="similarity">
    <text evidence="1">Belongs to the elongation factor P family.</text>
</comment>
<keyword id="KW-0963">Cytoplasm</keyword>
<keyword id="KW-0251">Elongation factor</keyword>
<keyword id="KW-0648">Protein biosynthesis</keyword>
<keyword id="KW-1185">Reference proteome</keyword>
<protein>
    <recommendedName>
        <fullName evidence="1">Elongation factor P</fullName>
        <shortName evidence="1">EF-P</shortName>
    </recommendedName>
</protein>
<organism>
    <name type="scientific">Rhizobium etli (strain ATCC 51251 / DSM 11541 / JCM 21823 / NBRC 15573 / CFN 42)</name>
    <dbReference type="NCBI Taxonomy" id="347834"/>
    <lineage>
        <taxon>Bacteria</taxon>
        <taxon>Pseudomonadati</taxon>
        <taxon>Pseudomonadota</taxon>
        <taxon>Alphaproteobacteria</taxon>
        <taxon>Hyphomicrobiales</taxon>
        <taxon>Rhizobiaceae</taxon>
        <taxon>Rhizobium/Agrobacterium group</taxon>
        <taxon>Rhizobium</taxon>
    </lineage>
</organism>
<sequence>MVKVIASSVRKGNVLDVDGKLYVVLTAQNFHPGKGTPVTQVDMRRIVDGVKVSERWRTTEQVERAFVEDVNFQYLYEDGEGFHFMNPATYDQVVVSAETMGDQKAYLQEGMTCILSIHEGVPLALELPRHVTLEIVETEPVVKGQTASSSYKPAMLSNGIRTSVPPHIDAGTRVVIATEDNSYVERAKD</sequence>
<gene>
    <name evidence="1" type="primary">efp</name>
    <name type="ordered locus">RHE_CH04040</name>
</gene>
<evidence type="ECO:0000255" key="1">
    <source>
        <dbReference type="HAMAP-Rule" id="MF_00141"/>
    </source>
</evidence>
<dbReference type="EMBL" id="CP000133">
    <property type="protein sequence ID" value="ABC92784.1"/>
    <property type="molecule type" value="Genomic_DNA"/>
</dbReference>
<dbReference type="RefSeq" id="WP_011427226.1">
    <property type="nucleotide sequence ID" value="NC_007761.1"/>
</dbReference>
<dbReference type="SMR" id="Q2K302"/>
<dbReference type="KEGG" id="ret:RHE_CH04040"/>
<dbReference type="eggNOG" id="COG0231">
    <property type="taxonomic scope" value="Bacteria"/>
</dbReference>
<dbReference type="HOGENOM" id="CLU_074944_1_1_5"/>
<dbReference type="OrthoDB" id="9801844at2"/>
<dbReference type="UniPathway" id="UPA00345"/>
<dbReference type="Proteomes" id="UP000001936">
    <property type="component" value="Chromosome"/>
</dbReference>
<dbReference type="GO" id="GO:0005737">
    <property type="term" value="C:cytoplasm"/>
    <property type="evidence" value="ECO:0007669"/>
    <property type="project" value="UniProtKB-SubCell"/>
</dbReference>
<dbReference type="GO" id="GO:0003746">
    <property type="term" value="F:translation elongation factor activity"/>
    <property type="evidence" value="ECO:0007669"/>
    <property type="project" value="UniProtKB-UniRule"/>
</dbReference>
<dbReference type="GO" id="GO:0043043">
    <property type="term" value="P:peptide biosynthetic process"/>
    <property type="evidence" value="ECO:0007669"/>
    <property type="project" value="InterPro"/>
</dbReference>
<dbReference type="CDD" id="cd04470">
    <property type="entry name" value="S1_EF-P_repeat_1"/>
    <property type="match status" value="1"/>
</dbReference>
<dbReference type="CDD" id="cd05794">
    <property type="entry name" value="S1_EF-P_repeat_2"/>
    <property type="match status" value="1"/>
</dbReference>
<dbReference type="FunFam" id="2.40.50.140:FF:000004">
    <property type="entry name" value="Elongation factor P"/>
    <property type="match status" value="1"/>
</dbReference>
<dbReference type="FunFam" id="2.40.50.140:FF:000009">
    <property type="entry name" value="Elongation factor P"/>
    <property type="match status" value="1"/>
</dbReference>
<dbReference type="Gene3D" id="2.30.30.30">
    <property type="match status" value="1"/>
</dbReference>
<dbReference type="Gene3D" id="2.40.50.140">
    <property type="entry name" value="Nucleic acid-binding proteins"/>
    <property type="match status" value="2"/>
</dbReference>
<dbReference type="HAMAP" id="MF_00141">
    <property type="entry name" value="EF_P"/>
    <property type="match status" value="1"/>
</dbReference>
<dbReference type="InterPro" id="IPR015365">
    <property type="entry name" value="Elong-fact-P_C"/>
</dbReference>
<dbReference type="InterPro" id="IPR012340">
    <property type="entry name" value="NA-bd_OB-fold"/>
</dbReference>
<dbReference type="InterPro" id="IPR014722">
    <property type="entry name" value="Rib_uL2_dom2"/>
</dbReference>
<dbReference type="InterPro" id="IPR020599">
    <property type="entry name" value="Transl_elong_fac_P/YeiP"/>
</dbReference>
<dbReference type="InterPro" id="IPR013185">
    <property type="entry name" value="Transl_elong_KOW-like"/>
</dbReference>
<dbReference type="InterPro" id="IPR001059">
    <property type="entry name" value="Transl_elong_P/YeiP_cen"/>
</dbReference>
<dbReference type="InterPro" id="IPR013852">
    <property type="entry name" value="Transl_elong_P/YeiP_CS"/>
</dbReference>
<dbReference type="InterPro" id="IPR011768">
    <property type="entry name" value="Transl_elongation_fac_P"/>
</dbReference>
<dbReference type="InterPro" id="IPR008991">
    <property type="entry name" value="Translation_prot_SH3-like_sf"/>
</dbReference>
<dbReference type="NCBIfam" id="TIGR00038">
    <property type="entry name" value="efp"/>
    <property type="match status" value="1"/>
</dbReference>
<dbReference type="NCBIfam" id="NF001810">
    <property type="entry name" value="PRK00529.1"/>
    <property type="match status" value="1"/>
</dbReference>
<dbReference type="PANTHER" id="PTHR30053">
    <property type="entry name" value="ELONGATION FACTOR P"/>
    <property type="match status" value="1"/>
</dbReference>
<dbReference type="PANTHER" id="PTHR30053:SF14">
    <property type="entry name" value="TRANSLATION ELONGATION FACTOR KOW-LIKE DOMAIN-CONTAINING PROTEIN"/>
    <property type="match status" value="1"/>
</dbReference>
<dbReference type="Pfam" id="PF01132">
    <property type="entry name" value="EFP"/>
    <property type="match status" value="1"/>
</dbReference>
<dbReference type="Pfam" id="PF08207">
    <property type="entry name" value="EFP_N"/>
    <property type="match status" value="1"/>
</dbReference>
<dbReference type="Pfam" id="PF09285">
    <property type="entry name" value="Elong-fact-P_C"/>
    <property type="match status" value="1"/>
</dbReference>
<dbReference type="PIRSF" id="PIRSF005901">
    <property type="entry name" value="EF-P"/>
    <property type="match status" value="1"/>
</dbReference>
<dbReference type="SMART" id="SM01185">
    <property type="entry name" value="EFP"/>
    <property type="match status" value="1"/>
</dbReference>
<dbReference type="SMART" id="SM00841">
    <property type="entry name" value="Elong-fact-P_C"/>
    <property type="match status" value="1"/>
</dbReference>
<dbReference type="SUPFAM" id="SSF50249">
    <property type="entry name" value="Nucleic acid-binding proteins"/>
    <property type="match status" value="2"/>
</dbReference>
<dbReference type="SUPFAM" id="SSF50104">
    <property type="entry name" value="Translation proteins SH3-like domain"/>
    <property type="match status" value="1"/>
</dbReference>
<dbReference type="PROSITE" id="PS01275">
    <property type="entry name" value="EFP"/>
    <property type="match status" value="1"/>
</dbReference>
<name>EFP_RHIEC</name>
<reference key="1">
    <citation type="journal article" date="2006" name="Proc. Natl. Acad. Sci. U.S.A.">
        <title>The partitioned Rhizobium etli genome: genetic and metabolic redundancy in seven interacting replicons.</title>
        <authorList>
            <person name="Gonzalez V."/>
            <person name="Santamaria R.I."/>
            <person name="Bustos P."/>
            <person name="Hernandez-Gonzalez I."/>
            <person name="Medrano-Soto A."/>
            <person name="Moreno-Hagelsieb G."/>
            <person name="Janga S.C."/>
            <person name="Ramirez M.A."/>
            <person name="Jimenez-Jacinto V."/>
            <person name="Collado-Vides J."/>
            <person name="Davila G."/>
        </authorList>
    </citation>
    <scope>NUCLEOTIDE SEQUENCE [LARGE SCALE GENOMIC DNA]</scope>
    <source>
        <strain>ATCC 51251 / DSM 11541 / JCM 21823 / NBRC 15573 / CFN 42</strain>
    </source>
</reference>